<sequence length="3707" mass="406000">MKGIRKGESRAKESKPWEPGKRRCAKCGRLDFILMKKMGIKSGFTFWNLVFLLTVSCVKGFIYTCGGTLKGLNGTIESPGFPYGYPNGANCTWVIIAEERNRIQIVFQSFALEEEYDYLSLYDGHPHPTNFRTRLTGFHLPPPVTSTKSVFSLRLTSDFAVSAHGFKVYYEELQSSSCGNPGVPPKGVLYGTRFDVGDKIRYSCVTGYILDGHPQLTCIANSVNTASWDFPVPICRAEDACGGTMRGSSGIISSPSFPNEYHNNADCTWTIVAEPGDTISLIFTDFQMEEKYDYLEIEGSEPPTIWLSGMNIPPPIISNKNWLRLHFVTDSNHRYRGFSAPYQGSSTLTHTTSTGELEEHNRTTTGAIAVASTPADVTVSSVTAVTIHRLSEEQRVQVTSLRNSGLDPNTSKDGLSPHPADTQSTRRRPRHAEQIERTKELAVVTHRVKKAIDFKSRGFKLFPGKDNSNKFSILNEGGIKTASNLCPDPGEPENGKRIGSDFSLGSTVQFSCDEDYVLQGAKSITCQRIAEVFAAWSDHRPVCKVKTCGSNLQGPSGTFTSPNFPFQYDSNAQCVWVITAVNTNKVIQINFEEFDLEIGYDTLTIGDGGEVGDPRTVLQVLTGSFVPDLIVSMSSQMWLHLQTDESVGSVGFKVNYKEIEKESCGDPGTPLYGIREGDGFSNRDVLRFECQFGFELIGEKSIVCQENNQWSANIPICIFPCLSNFTAPMGTVLSPDYPEGYGNNLNCIWTIISDPGSRIHLSFNDFDLESQFDFLAVKDGDSPESPILGTFTGAEVPSHLTSNSHILRLEFQADHSMSGRGFNITYNTFGHNECPDPGIPINARRFGDNFQLGSSISVICEEGFIKTQGTETITCILMDGKVMWSGLIPKCGAPCGGHFSAPSGVILSPGWPGYYKDSLNCEWVIEAEPGHSIKITFERFQTELNYDVLEVHDGPNLLSPLLGSYNGTQVPQFLFSSSNFIYLLFTTDNSRSNNGFKIHYESVTVNTYSCLDPGIPVHGRRYGHDFSIGSTVSFSCDSGYRLSHEEPLLCEKNHWWSHPLPTCDALCGGDVRGPSGTILSPGYPEFYPNSLNCTWTVDVTHGKGVQFNFHTFHLEDHHDYLLITENGSFTQPLARLTGSDLPPTINAGLYGNFRAQLRFISDFSISYEGFNITFSEYNLEPCEDPGIPQYGSRIGFNFGIGDTLTFSCSSGYRLEGTSEIICLGGGRRVWSAPLPRCVAECGASATNNEGILLSPNYPLNYENNHECIYSIQVQAGKGINISARTFHLAQGDVLKIYDGKDKTTHLLGAFTGASMRGLTLSSTSNQLWLEFNSDTEGTDEGFQLVYTSFELSHCEDPGIPQFGYKISDQGHFAGSTIIYGCNPGYTLHGSSLLKCMTGERRAWDYPLPSCIAECGGRFKGESSGRILSPGYPFPYDNNLRCMWMIEVDPGNIVSLQFLAFDTEASHDILRVWDGPPENDMLLKEISGSLIPEGIHSTLNIVTIQFDTDFYISKSGFAIQFSSSVATACRDPGVPMNGTRNGDGREPGDTVVFQCDPGYELQGEERITCIQVENRYFWQPSPPVCIAPCGGNLTGSSGFILSPNFPHPYPHSRDCDWTITVNADYVISLAFISFSIEPNYDFLYIYDGPDSNSPLIGSFQDSKLPERIESSSNTMHLAFRSDGSVSYTGFHLEYKAKLRESCFDPGNIMNGTRLGMDYKLGSTVTYYCDAGYVLQGYSTLTCIMGDDGRPGWNRALPSCHAPCGSRSTGSEGTVLSPNYPKNYSVGHNCVYSIAVPKEFVVFGQFVFFQTSLHDVVEVYDGPTQQSSLLSSLSGSHSGESLPLSSGNQITIRFTSVGPITAKGFHFVYQAVPRTSSTQCSSVPEPRFGRRIGNEFAVGSSVLFDCNPGYILHGSIAIRCETVPNSLAQWNDSLPTCIVPCGGILTKRKGTILSPGYPEPYDNNLNCVWKITVPEGAGIQVQVVSFATEHNWDSLDFYDGGDNNAPRLGSYSGTTIPHLLNSTSNNLYLNFQSDISVSAAGFHLEYTAIGLDSCPEPQTPSSGIKIGDRYMVGDVVSFQCDQGYSLQGHSHITCMPGPVRRWNYPIPICLAQCGGAMSDFSGVILSPGFPGNYPSSLDCTWTINLPIGFGVHLQFVNFSTETIHDYLEVRSGSSETSTVIGRLSGPQIPSSLFSTTHETSLYFHSDYSQNKQGFHIVYQAYQLQSCPDPRPFRNGFVIGNDFTVGQTISFECFPGYTLIGNSALTCLHGVSRNWNHPLPRCEALCGGNITAMNGTIYSPGYPDEYPNFQDCFWLVRVPPGNGIYINFTVLQTEPIYDFITVWDGPDQNSPQIGQFSGNTALESVYSTSNQILIKFHSDFTTSGFFVLSYHAYQLRVCQPPPPVPNAEILTEDDEFEIGDIIRYQCLPGFTLVGNAILTCRLGERLQMDGAPPVCQVLCPANELRLDSTGVILSPGYPDSYPNLQMCAWSISVEKGYNITMFVEFFQTEKEFDVLQVYDGPNIQSPVLISLSGDYSSAFNITSNGHEVFLQWSADHGNNKKGFRIRYIAFYCSTPESPPHGYIISQTGGQLNSVVRWACDRGFRLVGKSSAVCRKSSYGYHAWDAPVPACQAISCGIPKAPTNGGILTTDYLVGTRVTYFCNDGYRLSSKELTTAVCQSDGTWSNHNKTPRCVVVTCPSINSFILEHGRWRIVNGSHYEYKTKVVFSCDPGYHGLGPASIECLPNGTWSWRNERPYCQIISCGELPTPPNGNKIGTQTSYGSTAIFTCDLGFMLVGSAVRECLSSGLWSESETRCLAGHCGIPELIVNGQVIGENYGYRDTVVYQCNPGFRLIGSSVRICQQDHNWSGQLPSCVPVSCGHPGSPIYGRTSGNGFNFNDVVTFSCNIGYLMQGPTKAQCQANRQWSHPPPMCKVVNCSDPGIPANSKRESKIEHGNFTYGTVVFYDCNPGYFLFGSSVLICQPNGQWDKPLPECIMIDCGHPGVPPNAVLSGEKYTFGSTVHYSCTGKRSLLGQSSRTCQLNGHWSGSQPHCSGDATGTCGDPGTPGHGSRQESNFRTKSTVRYACDTGYILHGSEERTCLANGSWTGRQPECKAVQCGNPGTTANGKVFRIDGTTFSSSVIYSCMEGYILSGPSVRQCTANGTWSGTLPNCTIISCGDPGIPANGLRYGDDYVVGQNVSYMCQPGYTMELNGSRIRTCTINGTWSGVMPTCRAVTCPTPPQISNGRLEGTNFDWGFSISYICSPGYELSFPAVLTCVGNGTWSGEVPQCLPKFCGDPGIPAQGKREGKSFIYQSEVSFSCNFPFILVGSSTRICQADGTWSGSSPHCIEPTQTSCENPGVPRHGSQNNTFGFQVGSVVQFHCKKGHLLQGSTTRTCLPDLTWSGIQPECIPHSCKQPETPAHANVVGMDLPSHGYTLIYTCQPGFFLAGGTEHRVCRSDNTWTGKVPICEAGSKILVKDPRPALGTPSPKLSVPDDVFAQNYIWKGSYNFKGRKQPMTLTVTSFNASTGRVNATLSNSNMELLLSGVYKSQEARLMLRIYLIKVPAHASVKKMKEENWAMDGFVSAEPDGATYVFQGFIQGKDYGQFGLQRLGLNMSEGSNSSNQPHGTNSSSVAIAILVPFFALIFAGFGFYLYKQRTAPKTQYTGCSVHENNNGQAAFENPMYDTNAKSVEGKAVRFDPNLNTVCTMV</sequence>
<dbReference type="EMBL" id="AY210419">
    <property type="protein sequence ID" value="AAO34702.1"/>
    <property type="status" value="ALT_INIT"/>
    <property type="molecule type" value="mRNA"/>
</dbReference>
<dbReference type="EMBL" id="AB114604">
    <property type="protein sequence ID" value="BAC82443.1"/>
    <property type="molecule type" value="mRNA"/>
</dbReference>
<dbReference type="EMBL" id="AB114605">
    <property type="protein sequence ID" value="BAC82444.1"/>
    <property type="molecule type" value="mRNA"/>
</dbReference>
<dbReference type="EMBL" id="AB067481">
    <property type="protein sequence ID" value="BAB67787.2"/>
    <property type="molecule type" value="mRNA"/>
</dbReference>
<dbReference type="EMBL" id="AK126252">
    <property type="status" value="NOT_ANNOTATED_CDS"/>
    <property type="molecule type" value="mRNA"/>
</dbReference>
<dbReference type="CCDS" id="CCDS6315.1">
    <molecule id="Q7Z407-1"/>
</dbReference>
<dbReference type="CCDS" id="CCDS6316.2">
    <molecule id="Q7Z407-3"/>
</dbReference>
<dbReference type="CCDS" id="CCDS6317.1">
    <molecule id="Q7Z407-2"/>
</dbReference>
<dbReference type="RefSeq" id="NP_443132.3">
    <molecule id="Q7Z407-3"/>
    <property type="nucleotide sequence ID" value="NM_052900.2"/>
</dbReference>
<dbReference type="RefSeq" id="NP_937756.1">
    <molecule id="Q7Z407-1"/>
    <property type="nucleotide sequence ID" value="NM_198123.2"/>
</dbReference>
<dbReference type="RefSeq" id="NP_937757.1">
    <molecule id="Q7Z407-2"/>
    <property type="nucleotide sequence ID" value="NM_198124.2"/>
</dbReference>
<dbReference type="RefSeq" id="XP_016868498.1">
    <molecule id="Q7Z407-4"/>
    <property type="nucleotide sequence ID" value="XM_017013009.3"/>
</dbReference>
<dbReference type="RefSeq" id="XP_054215670.1">
    <molecule id="Q7Z407-4"/>
    <property type="nucleotide sequence ID" value="XM_054359695.1"/>
</dbReference>
<dbReference type="SMR" id="Q7Z407"/>
<dbReference type="BioGRID" id="125350">
    <property type="interactions" value="3"/>
</dbReference>
<dbReference type="FunCoup" id="Q7Z407">
    <property type="interactions" value="814"/>
</dbReference>
<dbReference type="IntAct" id="Q7Z407">
    <property type="interactions" value="1"/>
</dbReference>
<dbReference type="MINT" id="Q7Z407"/>
<dbReference type="STRING" id="9606.ENSP00000297405"/>
<dbReference type="GlyCosmos" id="Q7Z407">
    <property type="glycosylation" value="41 sites, No reported glycans"/>
</dbReference>
<dbReference type="GlyGen" id="Q7Z407">
    <property type="glycosylation" value="48 sites, 1 O-linked glycan (3 sites)"/>
</dbReference>
<dbReference type="iPTMnet" id="Q7Z407"/>
<dbReference type="PhosphoSitePlus" id="Q7Z407"/>
<dbReference type="BioMuta" id="CSMD3"/>
<dbReference type="DMDM" id="257051058"/>
<dbReference type="MassIVE" id="Q7Z407"/>
<dbReference type="PaxDb" id="9606-ENSP00000297405"/>
<dbReference type="PeptideAtlas" id="Q7Z407"/>
<dbReference type="ProteomicsDB" id="69118">
    <molecule id="Q7Z407-1"/>
</dbReference>
<dbReference type="ProteomicsDB" id="69119">
    <molecule id="Q7Z407-2"/>
</dbReference>
<dbReference type="ProteomicsDB" id="69120">
    <molecule id="Q7Z407-3"/>
</dbReference>
<dbReference type="ProteomicsDB" id="69121">
    <molecule id="Q7Z407-4"/>
</dbReference>
<dbReference type="ProteomicsDB" id="69122">
    <molecule id="Q7Z407-5"/>
</dbReference>
<dbReference type="Antibodypedia" id="26636">
    <property type="antibodies" value="107 antibodies from 22 providers"/>
</dbReference>
<dbReference type="DNASU" id="114788"/>
<dbReference type="Ensembl" id="ENST00000297405.10">
    <molecule id="Q7Z407-1"/>
    <property type="protein sequence ID" value="ENSP00000297405.5"/>
    <property type="gene ID" value="ENSG00000164796.18"/>
</dbReference>
<dbReference type="Ensembl" id="ENST00000343508.7">
    <molecule id="Q7Z407-2"/>
    <property type="protein sequence ID" value="ENSP00000345799.3"/>
    <property type="gene ID" value="ENSG00000164796.18"/>
</dbReference>
<dbReference type="Ensembl" id="ENST00000455883.2">
    <molecule id="Q7Z407-3"/>
    <property type="protein sequence ID" value="ENSP00000412263.2"/>
    <property type="gene ID" value="ENSG00000164796.18"/>
</dbReference>
<dbReference type="GeneID" id="114788"/>
<dbReference type="KEGG" id="hsa:114788"/>
<dbReference type="MANE-Select" id="ENST00000297405.10">
    <property type="protein sequence ID" value="ENSP00000297405.5"/>
    <property type="RefSeq nucleotide sequence ID" value="NM_198123.2"/>
    <property type="RefSeq protein sequence ID" value="NP_937756.1"/>
</dbReference>
<dbReference type="UCSC" id="uc003ynt.4">
    <molecule id="Q7Z407-1"/>
    <property type="organism name" value="human"/>
</dbReference>
<dbReference type="AGR" id="HGNC:19291"/>
<dbReference type="CTD" id="114788"/>
<dbReference type="DisGeNET" id="114788"/>
<dbReference type="GeneCards" id="CSMD3"/>
<dbReference type="HGNC" id="HGNC:19291">
    <property type="gene designation" value="CSMD3"/>
</dbReference>
<dbReference type="HPA" id="ENSG00000164796">
    <property type="expression patterns" value="Tissue enhanced (brain)"/>
</dbReference>
<dbReference type="MalaCards" id="CSMD3"/>
<dbReference type="MIM" id="608399">
    <property type="type" value="gene"/>
</dbReference>
<dbReference type="neXtProt" id="NX_Q7Z407"/>
<dbReference type="OpenTargets" id="ENSG00000164796"/>
<dbReference type="PharmGKB" id="PA134926063"/>
<dbReference type="VEuPathDB" id="HostDB:ENSG00000164796"/>
<dbReference type="eggNOG" id="KOG4297">
    <property type="taxonomic scope" value="Eukaryota"/>
</dbReference>
<dbReference type="GeneTree" id="ENSGT00940000155549"/>
<dbReference type="HOGENOM" id="CLU_000277_0_0_1"/>
<dbReference type="InParanoid" id="Q7Z407"/>
<dbReference type="OMA" id="AVNTNKX"/>
<dbReference type="OrthoDB" id="5804959at2759"/>
<dbReference type="PAN-GO" id="Q7Z407">
    <property type="GO annotations" value="2 GO annotations based on evolutionary models"/>
</dbReference>
<dbReference type="PhylomeDB" id="Q7Z407"/>
<dbReference type="TreeFam" id="TF316872"/>
<dbReference type="PathwayCommons" id="Q7Z407"/>
<dbReference type="SignaLink" id="Q7Z407"/>
<dbReference type="BioGRID-ORCS" id="114788">
    <property type="hits" value="15 hits in 1151 CRISPR screens"/>
</dbReference>
<dbReference type="ChiTaRS" id="CSMD3">
    <property type="organism name" value="human"/>
</dbReference>
<dbReference type="GenomeRNAi" id="114788"/>
<dbReference type="Pharos" id="Q7Z407">
    <property type="development level" value="Tbio"/>
</dbReference>
<dbReference type="PRO" id="PR:Q7Z407"/>
<dbReference type="Proteomes" id="UP000005640">
    <property type="component" value="Chromosome 8"/>
</dbReference>
<dbReference type="RNAct" id="Q7Z407">
    <property type="molecule type" value="protein"/>
</dbReference>
<dbReference type="Bgee" id="ENSG00000164796">
    <property type="expression patterns" value="Expressed in middle temporal gyrus and 102 other cell types or tissues"/>
</dbReference>
<dbReference type="ExpressionAtlas" id="Q7Z407">
    <property type="expression patterns" value="baseline and differential"/>
</dbReference>
<dbReference type="GO" id="GO:0005886">
    <property type="term" value="C:plasma membrane"/>
    <property type="evidence" value="ECO:0000250"/>
    <property type="project" value="UniProtKB"/>
</dbReference>
<dbReference type="GO" id="GO:0050773">
    <property type="term" value="P:regulation of dendrite development"/>
    <property type="evidence" value="ECO:0000250"/>
    <property type="project" value="UniProtKB"/>
</dbReference>
<dbReference type="CDD" id="cd00033">
    <property type="entry name" value="CCP"/>
    <property type="match status" value="28"/>
</dbReference>
<dbReference type="CDD" id="cd00041">
    <property type="entry name" value="CUB"/>
    <property type="match status" value="14"/>
</dbReference>
<dbReference type="FunFam" id="2.10.70.10:FF:000011">
    <property type="entry name" value="CUB and sushi domain-containing protein 3 isoform A"/>
    <property type="match status" value="6"/>
</dbReference>
<dbReference type="FunFam" id="2.10.70.10:FF:000066">
    <property type="entry name" value="CUB and sushi domain-containing protein 3 isoform X1"/>
    <property type="match status" value="1"/>
</dbReference>
<dbReference type="FunFam" id="2.60.120.290:FF:000001">
    <property type="entry name" value="CUB and sushi domain-containing protein 3 isoform X1"/>
    <property type="match status" value="14"/>
</dbReference>
<dbReference type="FunFam" id="2.10.70.10:FF:000002">
    <property type="entry name" value="CUB and Sushi multiple domains 3"/>
    <property type="match status" value="11"/>
</dbReference>
<dbReference type="FunFam" id="2.10.70.10:FF:000047">
    <property type="entry name" value="CUB and Sushi multiple domains 3"/>
    <property type="match status" value="1"/>
</dbReference>
<dbReference type="FunFam" id="2.10.70.10:FF:000053">
    <property type="entry name" value="CUB and Sushi multiple domains 3"/>
    <property type="match status" value="1"/>
</dbReference>
<dbReference type="FunFam" id="2.10.70.10:FF:000056">
    <property type="entry name" value="CUB and Sushi multiple domains 3"/>
    <property type="match status" value="1"/>
</dbReference>
<dbReference type="FunFam" id="2.10.70.10:FF:000062">
    <property type="entry name" value="CUB and Sushi multiple domains 3"/>
    <property type="match status" value="1"/>
</dbReference>
<dbReference type="FunFam" id="2.10.70.10:FF:000067">
    <property type="entry name" value="CUB and Sushi multiple domains 3"/>
    <property type="match status" value="1"/>
</dbReference>
<dbReference type="FunFam" id="2.10.70.10:FF:000074">
    <property type="entry name" value="CUB and Sushi multiple domains 3"/>
    <property type="match status" value="1"/>
</dbReference>
<dbReference type="Gene3D" id="2.10.70.10">
    <property type="entry name" value="Complement Module, domain 1"/>
    <property type="match status" value="28"/>
</dbReference>
<dbReference type="Gene3D" id="2.60.120.290">
    <property type="entry name" value="Spermadhesin, CUB domain"/>
    <property type="match status" value="14"/>
</dbReference>
<dbReference type="InterPro" id="IPR000859">
    <property type="entry name" value="CUB_dom"/>
</dbReference>
<dbReference type="InterPro" id="IPR051277">
    <property type="entry name" value="SEZ6_CSMD_C4BPB_Regulators"/>
</dbReference>
<dbReference type="InterPro" id="IPR035914">
    <property type="entry name" value="Sperma_CUB_dom_sf"/>
</dbReference>
<dbReference type="InterPro" id="IPR035976">
    <property type="entry name" value="Sushi/SCR/CCP_sf"/>
</dbReference>
<dbReference type="InterPro" id="IPR000436">
    <property type="entry name" value="Sushi_SCR_CCP_dom"/>
</dbReference>
<dbReference type="PANTHER" id="PTHR45656">
    <property type="entry name" value="PROTEIN CBR-CLEC-78"/>
    <property type="match status" value="1"/>
</dbReference>
<dbReference type="PANTHER" id="PTHR45656:SF4">
    <property type="entry name" value="PROTEIN CBR-CLEC-78"/>
    <property type="match status" value="1"/>
</dbReference>
<dbReference type="Pfam" id="PF00431">
    <property type="entry name" value="CUB"/>
    <property type="match status" value="14"/>
</dbReference>
<dbReference type="Pfam" id="PF00084">
    <property type="entry name" value="Sushi"/>
    <property type="match status" value="28"/>
</dbReference>
<dbReference type="SMART" id="SM00032">
    <property type="entry name" value="CCP"/>
    <property type="match status" value="28"/>
</dbReference>
<dbReference type="SMART" id="SM00042">
    <property type="entry name" value="CUB"/>
    <property type="match status" value="14"/>
</dbReference>
<dbReference type="SUPFAM" id="SSF57535">
    <property type="entry name" value="Complement control module/SCR domain"/>
    <property type="match status" value="28"/>
</dbReference>
<dbReference type="SUPFAM" id="SSF49854">
    <property type="entry name" value="Spermadhesin, CUB domain"/>
    <property type="match status" value="14"/>
</dbReference>
<dbReference type="PROSITE" id="PS01180">
    <property type="entry name" value="CUB"/>
    <property type="match status" value="14"/>
</dbReference>
<dbReference type="PROSITE" id="PS50923">
    <property type="entry name" value="SUSHI"/>
    <property type="match status" value="28"/>
</dbReference>
<protein>
    <recommendedName>
        <fullName>CUB and sushi domain-containing protein 3</fullName>
    </recommendedName>
    <alternativeName>
        <fullName>CUB and sushi multiple domains protein 3</fullName>
    </alternativeName>
</protein>
<feature type="chain" id="PRO_0000021027" description="CUB and sushi domain-containing protein 3">
    <location>
        <begin position="1"/>
        <end position="3707"/>
    </location>
</feature>
<feature type="topological domain" description="Cytoplasmic" evidence="3">
    <location>
        <begin position="1"/>
        <end position="42"/>
    </location>
</feature>
<feature type="transmembrane region" description="Helical" evidence="3">
    <location>
        <begin position="43"/>
        <end position="63"/>
    </location>
</feature>
<feature type="topological domain" description="Extracellular" evidence="3">
    <location>
        <begin position="64"/>
        <end position="3630"/>
    </location>
</feature>
<feature type="transmembrane region" description="Helical" evidence="3">
    <location>
        <begin position="3631"/>
        <end position="3651"/>
    </location>
</feature>
<feature type="topological domain" description="Cytoplasmic" evidence="3">
    <location>
        <begin position="3652"/>
        <end position="3707"/>
    </location>
</feature>
<feature type="domain" description="CUB 1" evidence="4">
    <location>
        <begin position="65"/>
        <end position="173"/>
    </location>
</feature>
<feature type="domain" description="Sushi 1" evidence="5">
    <location>
        <begin position="176"/>
        <end position="237"/>
    </location>
</feature>
<feature type="domain" description="CUB 2" evidence="4">
    <location>
        <begin position="241"/>
        <end position="345"/>
    </location>
</feature>
<feature type="domain" description="Sushi 2" evidence="5">
    <location>
        <begin position="484"/>
        <end position="545"/>
    </location>
</feature>
<feature type="domain" description="CUB 3" evidence="4">
    <location>
        <begin position="548"/>
        <end position="659"/>
    </location>
</feature>
<feature type="domain" description="Sushi 3" evidence="5">
    <location>
        <begin position="662"/>
        <end position="719"/>
    </location>
</feature>
<feature type="domain" description="CUB 4" evidence="4">
    <location>
        <begin position="721"/>
        <end position="829"/>
    </location>
</feature>
<feature type="domain" description="Sushi 4" evidence="5">
    <location>
        <begin position="832"/>
        <end position="893"/>
    </location>
</feature>
<feature type="domain" description="CUB 5" evidence="4">
    <location>
        <begin position="895"/>
        <end position="1003"/>
    </location>
</feature>
<feature type="domain" description="Sushi 5" evidence="5">
    <location>
        <begin position="1008"/>
        <end position="1065"/>
    </location>
</feature>
<feature type="domain" description="CUB 6" evidence="4">
    <location>
        <begin position="1067"/>
        <end position="1177"/>
    </location>
</feature>
<feature type="domain" description="Sushi 6" evidence="5">
    <location>
        <begin position="1180"/>
        <end position="1239"/>
    </location>
</feature>
<feature type="domain" description="CUB 7" evidence="4">
    <location>
        <begin position="1241"/>
        <end position="1349"/>
    </location>
</feature>
<feature type="domain" description="Sushi 7" evidence="5">
    <location>
        <begin position="1352"/>
        <end position="1412"/>
    </location>
</feature>
<feature type="domain" description="CUB 8" evidence="4">
    <location>
        <begin position="1414"/>
        <end position="1523"/>
    </location>
</feature>
<feature type="domain" description="Sushi 8" evidence="5">
    <location>
        <begin position="1526"/>
        <end position="1586"/>
    </location>
</feature>
<feature type="domain" description="CUB 9" evidence="4">
    <location>
        <begin position="1588"/>
        <end position="1696"/>
    </location>
</feature>
<feature type="domain" description="Sushi 9" evidence="5">
    <location>
        <begin position="1699"/>
        <end position="1760"/>
    </location>
</feature>
<feature type="domain" description="CUB 10" evidence="4">
    <location>
        <begin position="1762"/>
        <end position="1870"/>
    </location>
</feature>
<feature type="domain" description="Sushi 10" evidence="5">
    <location>
        <begin position="1876"/>
        <end position="1937"/>
    </location>
</feature>
<feature type="domain" description="CUB 11" evidence="4">
    <location>
        <begin position="1939"/>
        <end position="2047"/>
    </location>
</feature>
<feature type="domain" description="Sushi 11" evidence="5">
    <location>
        <begin position="2050"/>
        <end position="2109"/>
    </location>
</feature>
<feature type="domain" description="CUB 12" evidence="4">
    <location>
        <begin position="2111"/>
        <end position="2219"/>
    </location>
</feature>
<feature type="domain" description="Sushi 12" evidence="5">
    <location>
        <begin position="2222"/>
        <end position="2281"/>
    </location>
</feature>
<feature type="domain" description="CUB 13" evidence="4">
    <location>
        <begin position="2283"/>
        <end position="2394"/>
    </location>
</feature>
<feature type="domain" description="Sushi 13" evidence="5">
    <location>
        <begin position="2393"/>
        <end position="2454"/>
    </location>
</feature>
<feature type="domain" description="CUB 14" evidence="4">
    <location>
        <begin position="2456"/>
        <end position="2567"/>
    </location>
</feature>
<feature type="domain" description="Sushi 14" evidence="5">
    <location>
        <begin position="2567"/>
        <end position="2629"/>
    </location>
</feature>
<feature type="domain" description="Sushi 15" evidence="5">
    <location>
        <begin position="2630"/>
        <end position="2691"/>
    </location>
</feature>
<feature type="domain" description="Sushi 16" evidence="5">
    <location>
        <begin position="2692"/>
        <end position="2756"/>
    </location>
</feature>
<feature type="domain" description="Sushi 17" evidence="5">
    <location>
        <begin position="2757"/>
        <end position="2814"/>
    </location>
</feature>
<feature type="domain" description="Sushi 18" evidence="5">
    <location>
        <begin position="2815"/>
        <end position="2872"/>
    </location>
</feature>
<feature type="domain" description="Sushi 19" evidence="5">
    <location>
        <begin position="2873"/>
        <end position="2930"/>
    </location>
</feature>
<feature type="domain" description="Sushi 20" evidence="5">
    <location>
        <begin position="2931"/>
        <end position="2992"/>
    </location>
</feature>
<feature type="domain" description="Sushi 21" evidence="5">
    <location>
        <begin position="2993"/>
        <end position="3050"/>
    </location>
</feature>
<feature type="domain" description="Sushi 22" evidence="5">
    <location>
        <begin position="3054"/>
        <end position="3111"/>
    </location>
</feature>
<feature type="domain" description="Sushi 23" evidence="5">
    <location>
        <begin position="3112"/>
        <end position="3170"/>
    </location>
</feature>
<feature type="domain" description="Sushi 24" evidence="5">
    <location>
        <begin position="3171"/>
        <end position="3230"/>
    </location>
</feature>
<feature type="domain" description="Sushi 25" evidence="5">
    <location>
        <begin position="3231"/>
        <end position="3288"/>
    </location>
</feature>
<feature type="domain" description="Sushi 26" evidence="5">
    <location>
        <begin position="3289"/>
        <end position="3346"/>
    </location>
</feature>
<feature type="domain" description="Sushi 27" evidence="5">
    <location>
        <begin position="3350"/>
        <end position="3408"/>
    </location>
</feature>
<feature type="domain" description="Sushi 28" evidence="5">
    <location>
        <begin position="3409"/>
        <end position="3468"/>
    </location>
</feature>
<feature type="region of interest" description="Disordered" evidence="6">
    <location>
        <begin position="1"/>
        <end position="21"/>
    </location>
</feature>
<feature type="region of interest" description="Disordered" evidence="6">
    <location>
        <begin position="394"/>
        <end position="435"/>
    </location>
</feature>
<feature type="compositionally biased region" description="Polar residues" evidence="6">
    <location>
        <begin position="396"/>
        <end position="413"/>
    </location>
</feature>
<feature type="glycosylation site" description="N-linked (GlcNAc...) asparagine" evidence="3">
    <location>
        <position position="73"/>
    </location>
</feature>
<feature type="glycosylation site" description="N-linked (GlcNAc...) asparagine" evidence="3">
    <location>
        <position position="90"/>
    </location>
</feature>
<feature type="glycosylation site" description="N-linked (GlcNAc...) asparagine" evidence="3">
    <location>
        <position position="361"/>
    </location>
</feature>
<feature type="glycosylation site" description="N-linked (GlcNAc...) asparagine" evidence="3">
    <location>
        <position position="409"/>
    </location>
</feature>
<feature type="glycosylation site" description="N-linked (GlcNAc...) asparagine" evidence="3">
    <location>
        <position position="724"/>
    </location>
</feature>
<feature type="glycosylation site" description="N-linked (GlcNAc...) asparagine" evidence="3">
    <location>
        <position position="823"/>
    </location>
</feature>
<feature type="glycosylation site" description="N-linked (GlcNAc...) asparagine" evidence="3">
    <location>
        <position position="966"/>
    </location>
</feature>
<feature type="glycosylation site" description="N-linked (GlcNAc...) asparagine" evidence="3">
    <location>
        <position position="1092"/>
    </location>
</feature>
<feature type="glycosylation site" description="N-linked (GlcNAc...) asparagine" evidence="3">
    <location>
        <position position="1126"/>
    </location>
</feature>
<feature type="glycosylation site" description="N-linked (GlcNAc...) asparagine" evidence="3">
    <location>
        <position position="1171"/>
    </location>
</feature>
<feature type="glycosylation site" description="N-linked (GlcNAc...) asparagine" evidence="3">
    <location>
        <position position="1280"/>
    </location>
</feature>
<feature type="glycosylation site" description="N-linked (GlcNAc...) asparagine" evidence="3">
    <location>
        <position position="1536"/>
    </location>
</feature>
<feature type="glycosylation site" description="N-linked (GlcNAc...) asparagine" evidence="3">
    <location>
        <position position="1591"/>
    </location>
</feature>
<feature type="glycosylation site" description="N-linked (GlcNAc...) asparagine" evidence="3">
    <location>
        <position position="1709"/>
    </location>
</feature>
<feature type="glycosylation site" description="N-linked (GlcNAc...) asparagine" evidence="3">
    <location>
        <position position="1781"/>
    </location>
</feature>
<feature type="glycosylation site" description="N-linked (GlcNAc...) asparagine" evidence="3">
    <location>
        <position position="1929"/>
    </location>
</feature>
<feature type="glycosylation site" description="N-linked (GlcNAc...) asparagine" evidence="3">
    <location>
        <position position="2019"/>
    </location>
</feature>
<feature type="glycosylation site" description="N-linked (GlcNAc...) asparagine" evidence="3">
    <location>
        <position position="2155"/>
    </location>
</feature>
<feature type="glycosylation site" description="N-linked (GlcNAc...) asparagine" evidence="3">
    <location>
        <position position="2286"/>
    </location>
</feature>
<feature type="glycosylation site" description="N-linked (GlcNAc...) asparagine" evidence="3">
    <location>
        <position position="2291"/>
    </location>
</feature>
<feature type="glycosylation site" description="N-linked (GlcNAc...) asparagine" evidence="3">
    <location>
        <position position="2324"/>
    </location>
</feature>
<feature type="glycosylation site" description="N-linked (GlcNAc...) asparagine" evidence="3">
    <location>
        <position position="2495"/>
    </location>
</feature>
<feature type="glycosylation site" description="N-linked (GlcNAc...) asparagine" evidence="3">
    <location>
        <position position="2537"/>
    </location>
</feature>
<feature type="glycosylation site" description="N-linked (GlcNAc...) asparagine" evidence="3">
    <location>
        <position position="2711"/>
    </location>
</feature>
<feature type="glycosylation site" description="N-linked (GlcNAc...) asparagine" evidence="3">
    <location>
        <position position="2742"/>
    </location>
</feature>
<feature type="glycosylation site" description="N-linked (GlcNAc...) asparagine" evidence="3">
    <location>
        <position position="2862"/>
    </location>
</feature>
<feature type="glycosylation site" description="N-linked (GlcNAc...) asparagine" evidence="3">
    <location>
        <position position="2932"/>
    </location>
</feature>
<feature type="glycosylation site" description="N-linked (GlcNAc...) asparagine" evidence="3">
    <location>
        <position position="2952"/>
    </location>
</feature>
<feature type="glycosylation site" description="N-linked (GlcNAc...) asparagine" evidence="3">
    <location>
        <position position="3099"/>
    </location>
</feature>
<feature type="glycosylation site" description="N-linked (GlcNAc...) asparagine" evidence="3">
    <location>
        <position position="3158"/>
    </location>
</feature>
<feature type="glycosylation site" description="N-linked (GlcNAc...) asparagine" evidence="3">
    <location>
        <position position="3167"/>
    </location>
</feature>
<feature type="glycosylation site" description="N-linked (GlcNAc...) asparagine" evidence="3">
    <location>
        <position position="3194"/>
    </location>
</feature>
<feature type="glycosylation site" description="N-linked (GlcNAc...) asparagine" evidence="3">
    <location>
        <position position="3208"/>
    </location>
</feature>
<feature type="glycosylation site" description="N-linked (GlcNAc...) asparagine" evidence="3">
    <location>
        <position position="3218"/>
    </location>
</feature>
<feature type="glycosylation site" description="N-linked (GlcNAc...) asparagine" evidence="3">
    <location>
        <position position="3276"/>
    </location>
</feature>
<feature type="glycosylation site" description="N-linked (GlcNAc...) asparagine" evidence="3">
    <location>
        <position position="3364"/>
    </location>
</feature>
<feature type="glycosylation site" description="N-linked (GlcNAc...) asparagine" evidence="3">
    <location>
        <position position="3522"/>
    </location>
</feature>
<feature type="glycosylation site" description="N-linked (GlcNAc...) asparagine" evidence="3">
    <location>
        <position position="3529"/>
    </location>
</feature>
<feature type="glycosylation site" description="N-linked (GlcNAc...) asparagine" evidence="3">
    <location>
        <position position="3612"/>
    </location>
</feature>
<feature type="glycosylation site" description="N-linked (GlcNAc...) asparagine" evidence="3">
    <location>
        <position position="3618"/>
    </location>
</feature>
<feature type="glycosylation site" description="N-linked (GlcNAc...) asparagine" evidence="3">
    <location>
        <position position="3627"/>
    </location>
</feature>
<feature type="disulfide bond" evidence="1">
    <location>
        <begin position="65"/>
        <end position="91"/>
    </location>
</feature>
<feature type="disulfide bond" evidence="1">
    <location>
        <begin position="178"/>
        <end position="218"/>
    </location>
</feature>
<feature type="disulfide bond" evidence="1">
    <location>
        <begin position="204"/>
        <end position="235"/>
    </location>
</feature>
<feature type="disulfide bond" evidence="1">
    <location>
        <begin position="241"/>
        <end position="267"/>
    </location>
</feature>
<feature type="disulfide bond" evidence="1">
    <location>
        <begin position="486"/>
        <end position="526"/>
    </location>
</feature>
<feature type="disulfide bond" evidence="1">
    <location>
        <begin position="512"/>
        <end position="543"/>
    </location>
</feature>
<feature type="disulfide bond" evidence="1">
    <location>
        <begin position="548"/>
        <end position="574"/>
    </location>
</feature>
<feature type="disulfide bond" evidence="1">
    <location>
        <begin position="664"/>
        <end position="704"/>
    </location>
</feature>
<feature type="disulfide bond" evidence="1">
    <location>
        <begin position="690"/>
        <end position="717"/>
    </location>
</feature>
<feature type="disulfide bond" evidence="1">
    <location>
        <begin position="721"/>
        <end position="747"/>
    </location>
</feature>
<feature type="disulfide bond" evidence="1">
    <location>
        <begin position="834"/>
        <end position="875"/>
    </location>
</feature>
<feature type="disulfide bond" evidence="1">
    <location>
        <begin position="860"/>
        <end position="891"/>
    </location>
</feature>
<feature type="disulfide bond" evidence="1">
    <location>
        <begin position="895"/>
        <end position="921"/>
    </location>
</feature>
<feature type="disulfide bond" evidence="1">
    <location>
        <begin position="1010"/>
        <end position="1050"/>
    </location>
</feature>
<feature type="disulfide bond" evidence="1">
    <location>
        <begin position="1036"/>
        <end position="1063"/>
    </location>
</feature>
<feature type="disulfide bond" evidence="1">
    <location>
        <begin position="1067"/>
        <end position="1093"/>
    </location>
</feature>
<feature type="disulfide bond" evidence="1">
    <location>
        <begin position="1182"/>
        <end position="1222"/>
    </location>
</feature>
<feature type="disulfide bond" evidence="1">
    <location>
        <begin position="1208"/>
        <end position="1237"/>
    </location>
</feature>
<feature type="disulfide bond" evidence="1">
    <location>
        <begin position="1241"/>
        <end position="1267"/>
    </location>
</feature>
<feature type="disulfide bond" evidence="1">
    <location>
        <begin position="1354"/>
        <end position="1395"/>
    </location>
</feature>
<feature type="disulfide bond" evidence="1">
    <location>
        <begin position="1381"/>
        <end position="1410"/>
    </location>
</feature>
<feature type="disulfide bond" evidence="1">
    <location>
        <begin position="1414"/>
        <end position="1441"/>
    </location>
</feature>
<feature type="disulfide bond" evidence="1">
    <location>
        <begin position="1528"/>
        <end position="1568"/>
    </location>
</feature>
<feature type="disulfide bond" evidence="1">
    <location>
        <begin position="1554"/>
        <end position="1584"/>
    </location>
</feature>
<feature type="disulfide bond" evidence="1">
    <location>
        <begin position="1588"/>
        <end position="1614"/>
    </location>
</feature>
<feature type="disulfide bond" evidence="1">
    <location>
        <begin position="1701"/>
        <end position="1741"/>
    </location>
</feature>
<feature type="disulfide bond" evidence="1">
    <location>
        <begin position="1727"/>
        <end position="1758"/>
    </location>
</feature>
<feature type="disulfide bond" evidence="1">
    <location>
        <begin position="1762"/>
        <end position="1788"/>
    </location>
</feature>
<feature type="disulfide bond" evidence="1">
    <location>
        <begin position="1878"/>
        <end position="1918"/>
    </location>
</feature>
<feature type="disulfide bond" evidence="1">
    <location>
        <begin position="1904"/>
        <end position="1935"/>
    </location>
</feature>
<feature type="disulfide bond" evidence="1">
    <location>
        <begin position="1939"/>
        <end position="1965"/>
    </location>
</feature>
<feature type="disulfide bond" evidence="1">
    <location>
        <begin position="2052"/>
        <end position="2092"/>
    </location>
</feature>
<feature type="disulfide bond" evidence="1">
    <location>
        <begin position="2078"/>
        <end position="2107"/>
    </location>
</feature>
<feature type="disulfide bond" evidence="1">
    <location>
        <begin position="2111"/>
        <end position="2137"/>
    </location>
</feature>
<feature type="disulfide bond" evidence="1">
    <location>
        <begin position="2224"/>
        <end position="2264"/>
    </location>
</feature>
<feature type="disulfide bond" evidence="1">
    <location>
        <begin position="2250"/>
        <end position="2279"/>
    </location>
</feature>
<feature type="disulfide bond" evidence="1">
    <location>
        <begin position="2283"/>
        <end position="2309"/>
    </location>
</feature>
<feature type="disulfide bond" evidence="1">
    <location>
        <begin position="2395"/>
        <end position="2437"/>
    </location>
</feature>
<feature type="disulfide bond" evidence="1">
    <location>
        <begin position="2423"/>
        <end position="2452"/>
    </location>
</feature>
<feature type="disulfide bond" evidence="1">
    <location>
        <begin position="2456"/>
        <end position="2484"/>
    </location>
</feature>
<feature type="disulfide bond" evidence="1">
    <location>
        <begin position="2569"/>
        <end position="2610"/>
    </location>
</feature>
<feature type="disulfide bond" evidence="1">
    <location>
        <begin position="2596"/>
        <end position="2627"/>
    </location>
</feature>
<feature type="disulfide bond" evidence="1">
    <location>
        <begin position="2632"/>
        <end position="2674"/>
    </location>
</feature>
<feature type="disulfide bond" evidence="1">
    <location>
        <begin position="2658"/>
        <end position="2689"/>
    </location>
</feature>
<feature type="disulfide bond" evidence="1">
    <location>
        <begin position="2694"/>
        <end position="2739"/>
    </location>
</feature>
<feature type="disulfide bond" evidence="1">
    <location>
        <begin position="2725"/>
        <end position="2754"/>
    </location>
</feature>
<feature type="disulfide bond" evidence="1">
    <location>
        <begin position="2759"/>
        <end position="2799"/>
    </location>
</feature>
<feature type="disulfide bond" evidence="1">
    <location>
        <begin position="2785"/>
        <end position="2812"/>
    </location>
</feature>
<feature type="disulfide bond" evidence="1">
    <location>
        <begin position="2817"/>
        <end position="2857"/>
    </location>
</feature>
<feature type="disulfide bond" evidence="1">
    <location>
        <begin position="2843"/>
        <end position="2870"/>
    </location>
</feature>
<feature type="disulfide bond" evidence="1">
    <location>
        <begin position="2875"/>
        <end position="2915"/>
    </location>
</feature>
<feature type="disulfide bond" evidence="1">
    <location>
        <begin position="2901"/>
        <end position="2928"/>
    </location>
</feature>
<feature type="disulfide bond" evidence="1">
    <location>
        <begin position="2933"/>
        <end position="2977"/>
    </location>
</feature>
<feature type="disulfide bond" evidence="1">
    <location>
        <begin position="2963"/>
        <end position="2990"/>
    </location>
</feature>
<feature type="disulfide bond" evidence="1">
    <location>
        <begin position="2995"/>
        <end position="3035"/>
    </location>
</feature>
<feature type="disulfide bond" evidence="1">
    <location>
        <begin position="3021"/>
        <end position="3048"/>
    </location>
</feature>
<feature type="disulfide bond" evidence="1">
    <location>
        <begin position="3056"/>
        <end position="3096"/>
    </location>
</feature>
<feature type="disulfide bond" evidence="1">
    <location>
        <begin position="3082"/>
        <end position="3109"/>
    </location>
</feature>
<feature type="disulfide bond" evidence="1">
    <location>
        <begin position="3114"/>
        <end position="3155"/>
    </location>
</feature>
<feature type="disulfide bond" evidence="1">
    <location>
        <begin position="3141"/>
        <end position="3168"/>
    </location>
</feature>
<feature type="disulfide bond" evidence="1">
    <location>
        <begin position="3173"/>
        <end position="3215"/>
    </location>
</feature>
<feature type="disulfide bond" evidence="1">
    <location>
        <begin position="3199"/>
        <end position="3228"/>
    </location>
</feature>
<feature type="disulfide bond" evidence="1">
    <location>
        <begin position="3233"/>
        <end position="3273"/>
    </location>
</feature>
<feature type="disulfide bond" evidence="1">
    <location>
        <begin position="3259"/>
        <end position="3286"/>
    </location>
</feature>
<feature type="disulfide bond" evidence="1">
    <location>
        <begin position="3291"/>
        <end position="3331"/>
    </location>
</feature>
<feature type="disulfide bond" evidence="1">
    <location>
        <begin position="3317"/>
        <end position="3344"/>
    </location>
</feature>
<feature type="disulfide bond" evidence="1">
    <location>
        <begin position="3352"/>
        <end position="3393"/>
    </location>
</feature>
<feature type="disulfide bond" evidence="1">
    <location>
        <begin position="3379"/>
        <end position="3406"/>
    </location>
</feature>
<feature type="disulfide bond" evidence="1">
    <location>
        <begin position="3411"/>
        <end position="3453"/>
    </location>
</feature>
<feature type="disulfide bond" evidence="1">
    <location>
        <begin position="3438"/>
        <end position="3466"/>
    </location>
</feature>
<feature type="splice variant" id="VSP_009047" description="In isoform 2." evidence="13">
    <original>MKGIRKGESRAKESKPWEPGKRRCAKCGRLDFILMKKMGIKSGFTFWNLVFLLTVSCVK</original>
    <variation>MWSWFLCWKPVQLDRQTAS</variation>
    <location>
        <begin position="1"/>
        <end position="59"/>
    </location>
</feature>
<feature type="splice variant" id="VSP_009048" description="In isoform 3." evidence="12">
    <location>
        <begin position="344"/>
        <end position="447"/>
    </location>
</feature>
<feature type="splice variant" id="VSP_009050" description="In isoform 4." evidence="11">
    <location>
        <begin position="1799"/>
        <end position="1868"/>
    </location>
</feature>
<feature type="splice variant" id="VSP_009051" description="In isoform 5." evidence="14">
    <original>AISCGIPKAPTNGGILTTDYLVGTRVTYFCNDGYRLSSKELTTAVCQ</original>
    <variation>GEVYYAKMNKNMNVRLAPFNVFIWITHFSENGNIRKHIVNSFHKNKA</variation>
    <location>
        <begin position="2629"/>
        <end position="2675"/>
    </location>
</feature>
<feature type="splice variant" id="VSP_009052" description="In isoform 5." evidence="14">
    <location>
        <begin position="2676"/>
        <end position="3707"/>
    </location>
</feature>
<feature type="splice variant" id="VSP_009049" description="In isoform 3." evidence="12">
    <location>
        <begin position="2692"/>
        <end position="2756"/>
    </location>
</feature>
<feature type="sequence variant" id="VAR_017404" description="In dbSNP:rs2219898." evidence="8">
    <original>I</original>
    <variation>M</variation>
    <location>
        <position position="219"/>
    </location>
</feature>
<feature type="sequence variant" id="VAR_035688" description="In a colorectal cancer sample; somatic mutation." evidence="9">
    <original>W</original>
    <variation>G</variation>
    <location>
        <position position="322"/>
    </location>
</feature>
<feature type="sequence variant" id="VAR_064703" description="Found in a renal cell carcinoma case; somatic mutation; dbSNP:rs2131235240." evidence="10">
    <original>S</original>
    <variation>C</variation>
    <location>
        <position position="2020"/>
    </location>
</feature>
<feature type="sequence variant" id="VAR_017405" description="In dbSNP:rs2193430.">
    <original>V</original>
    <variation>L</variation>
    <location>
        <position position="3000"/>
    </location>
</feature>
<feature type="sequence variant" id="VAR_035689" description="In a colorectal cancer sample; somatic mutation; dbSNP:rs780986269." evidence="9">
    <original>R</original>
    <variation>H</variation>
    <location>
        <position position="3079"/>
    </location>
</feature>
<feature type="sequence variant" id="VAR_035690" description="In a colorectal cancer sample; somatic mutation; dbSNP:rs139968762." evidence="9">
    <original>R</original>
    <variation>Q</variation>
    <location>
        <position position="3359"/>
    </location>
</feature>
<feature type="sequence variant" id="VAR_017406" description="In dbSNP:rs1592624." evidence="8">
    <original>N</original>
    <variation>H</variation>
    <location>
        <position position="3621"/>
    </location>
</feature>
<feature type="sequence conflict" description="In Ref. 1; AAO34702." evidence="15" ref="1">
    <original>F</original>
    <variation>L</variation>
    <location>
        <position position="510"/>
    </location>
</feature>
<feature type="sequence conflict" description="In Ref. 1; AAO34702." evidence="15" ref="1">
    <original>T</original>
    <variation>A</variation>
    <location>
        <position position="726"/>
    </location>
</feature>
<feature type="sequence conflict" description="In Ref. 3; BAB67787." evidence="15" ref="3">
    <original>S</original>
    <variation>I</variation>
    <location>
        <position position="977"/>
    </location>
</feature>
<feature type="sequence conflict" description="In Ref. 1; AAO34702." evidence="15" ref="1">
    <original>I</original>
    <variation>T</variation>
    <location>
        <position position="2104"/>
    </location>
</feature>
<reference key="1">
    <citation type="journal article" date="2003" name="Genomics">
        <title>Identification of two new members of the CSMD gene family.</title>
        <authorList>
            <person name="Lau W.L."/>
            <person name="Scholnick S.B."/>
        </authorList>
    </citation>
    <scope>NUCLEOTIDE SEQUENCE [MRNA] (ISOFORM 3)</scope>
</reference>
<reference key="2">
    <citation type="journal article" date="2003" name="Biochem. Biophys. Res. Commun.">
        <title>A novel giant gene CSMD3 encoding a protein with CUB and sushi multiple domains: a candidate gene for benign adult familial myoclonic epilepsy on human chromosome 8q23.3-q24.1.</title>
        <authorList>
            <person name="Shimizu A."/>
            <person name="Asakawa S."/>
            <person name="Shimizu N."/>
        </authorList>
    </citation>
    <scope>NUCLEOTIDE SEQUENCE [MRNA] (ISOFORMS 1 AND 2)</scope>
    <scope>TISSUE SPECIFICITY</scope>
    <scope>VARIANTS MET-219 AND HIS-3621</scope>
    <source>
        <tissue>Brain</tissue>
        <tissue>Testis</tissue>
    </source>
</reference>
<reference key="3">
    <citation type="journal article" date="2001" name="DNA Res.">
        <title>Prediction of the coding sequences of unidentified human genes. XXI. The complete sequences of 60 new cDNA clones from brain which code for large proteins.</title>
        <authorList>
            <person name="Nagase T."/>
            <person name="Kikuno R."/>
            <person name="Ohara O."/>
        </authorList>
    </citation>
    <scope>NUCLEOTIDE SEQUENCE [LARGE SCALE MRNA] OF 661-3707 (ISOFORM 4)</scope>
    <scope>TISSUE SPECIFICITY</scope>
    <source>
        <tissue>Brain</tissue>
    </source>
</reference>
<reference key="4">
    <citation type="journal article" date="2004" name="Nat. Genet.">
        <title>Complete sequencing and characterization of 21,243 full-length human cDNAs.</title>
        <authorList>
            <person name="Ota T."/>
            <person name="Suzuki Y."/>
            <person name="Nishikawa T."/>
            <person name="Otsuki T."/>
            <person name="Sugiyama T."/>
            <person name="Irie R."/>
            <person name="Wakamatsu A."/>
            <person name="Hayashi K."/>
            <person name="Sato H."/>
            <person name="Nagai K."/>
            <person name="Kimura K."/>
            <person name="Makita H."/>
            <person name="Sekine M."/>
            <person name="Obayashi M."/>
            <person name="Nishi T."/>
            <person name="Shibahara T."/>
            <person name="Tanaka T."/>
            <person name="Ishii S."/>
            <person name="Yamamoto J."/>
            <person name="Saito K."/>
            <person name="Kawai Y."/>
            <person name="Isono Y."/>
            <person name="Nakamura Y."/>
            <person name="Nagahari K."/>
            <person name="Murakami K."/>
            <person name="Yasuda T."/>
            <person name="Iwayanagi T."/>
            <person name="Wagatsuma M."/>
            <person name="Shiratori A."/>
            <person name="Sudo H."/>
            <person name="Hosoiri T."/>
            <person name="Kaku Y."/>
            <person name="Kodaira H."/>
            <person name="Kondo H."/>
            <person name="Sugawara M."/>
            <person name="Takahashi M."/>
            <person name="Kanda K."/>
            <person name="Yokoi T."/>
            <person name="Furuya T."/>
            <person name="Kikkawa E."/>
            <person name="Omura Y."/>
            <person name="Abe K."/>
            <person name="Kamihara K."/>
            <person name="Katsuta N."/>
            <person name="Sato K."/>
            <person name="Tanikawa M."/>
            <person name="Yamazaki M."/>
            <person name="Ninomiya K."/>
            <person name="Ishibashi T."/>
            <person name="Yamashita H."/>
            <person name="Murakawa K."/>
            <person name="Fujimori K."/>
            <person name="Tanai H."/>
            <person name="Kimata M."/>
            <person name="Watanabe M."/>
            <person name="Hiraoka S."/>
            <person name="Chiba Y."/>
            <person name="Ishida S."/>
            <person name="Ono Y."/>
            <person name="Takiguchi S."/>
            <person name="Watanabe S."/>
            <person name="Yosida M."/>
            <person name="Hotuta T."/>
            <person name="Kusano J."/>
            <person name="Kanehori K."/>
            <person name="Takahashi-Fujii A."/>
            <person name="Hara H."/>
            <person name="Tanase T.-O."/>
            <person name="Nomura Y."/>
            <person name="Togiya S."/>
            <person name="Komai F."/>
            <person name="Hara R."/>
            <person name="Takeuchi K."/>
            <person name="Arita M."/>
            <person name="Imose N."/>
            <person name="Musashino K."/>
            <person name="Yuuki H."/>
            <person name="Oshima A."/>
            <person name="Sasaki N."/>
            <person name="Aotsuka S."/>
            <person name="Yoshikawa Y."/>
            <person name="Matsunawa H."/>
            <person name="Ichihara T."/>
            <person name="Shiohata N."/>
            <person name="Sano S."/>
            <person name="Moriya S."/>
            <person name="Momiyama H."/>
            <person name="Satoh N."/>
            <person name="Takami S."/>
            <person name="Terashima Y."/>
            <person name="Suzuki O."/>
            <person name="Nakagawa S."/>
            <person name="Senoh A."/>
            <person name="Mizoguchi H."/>
            <person name="Goto Y."/>
            <person name="Shimizu F."/>
            <person name="Wakebe H."/>
            <person name="Hishigaki H."/>
            <person name="Watanabe T."/>
            <person name="Sugiyama A."/>
            <person name="Takemoto M."/>
            <person name="Kawakami B."/>
            <person name="Yamazaki M."/>
            <person name="Watanabe K."/>
            <person name="Kumagai A."/>
            <person name="Itakura S."/>
            <person name="Fukuzumi Y."/>
            <person name="Fujimori Y."/>
            <person name="Komiyama M."/>
            <person name="Tashiro H."/>
            <person name="Tanigami A."/>
            <person name="Fujiwara T."/>
            <person name="Ono T."/>
            <person name="Yamada K."/>
            <person name="Fujii Y."/>
            <person name="Ozaki K."/>
            <person name="Hirao M."/>
            <person name="Ohmori Y."/>
            <person name="Kawabata A."/>
            <person name="Hikiji T."/>
            <person name="Kobatake N."/>
            <person name="Inagaki H."/>
            <person name="Ikema Y."/>
            <person name="Okamoto S."/>
            <person name="Okitani R."/>
            <person name="Kawakami T."/>
            <person name="Noguchi S."/>
            <person name="Itoh T."/>
            <person name="Shigeta K."/>
            <person name="Senba T."/>
            <person name="Matsumura K."/>
            <person name="Nakajima Y."/>
            <person name="Mizuno T."/>
            <person name="Morinaga M."/>
            <person name="Sasaki M."/>
            <person name="Togashi T."/>
            <person name="Oyama M."/>
            <person name="Hata H."/>
            <person name="Watanabe M."/>
            <person name="Komatsu T."/>
            <person name="Mizushima-Sugano J."/>
            <person name="Satoh T."/>
            <person name="Shirai Y."/>
            <person name="Takahashi Y."/>
            <person name="Nakagawa K."/>
            <person name="Okumura K."/>
            <person name="Nagase T."/>
            <person name="Nomura N."/>
            <person name="Kikuchi H."/>
            <person name="Masuho Y."/>
            <person name="Yamashita R."/>
            <person name="Nakai K."/>
            <person name="Yada T."/>
            <person name="Nakamura Y."/>
            <person name="Ohara O."/>
            <person name="Isogai T."/>
            <person name="Sugano S."/>
        </authorList>
    </citation>
    <scope>NUCLEOTIDE SEQUENCE [LARGE SCALE MRNA] OF 2271-3707 (ISOFORM 5)</scope>
    <source>
        <tissue>Liver</tissue>
    </source>
</reference>
<reference key="5">
    <citation type="journal article" date="2006" name="Science">
        <title>The consensus coding sequences of human breast and colorectal cancers.</title>
        <authorList>
            <person name="Sjoeblom T."/>
            <person name="Jones S."/>
            <person name="Wood L.D."/>
            <person name="Parsons D.W."/>
            <person name="Lin J."/>
            <person name="Barber T.D."/>
            <person name="Mandelker D."/>
            <person name="Leary R.J."/>
            <person name="Ptak J."/>
            <person name="Silliman N."/>
            <person name="Szabo S."/>
            <person name="Buckhaults P."/>
            <person name="Farrell C."/>
            <person name="Meeh P."/>
            <person name="Markowitz S.D."/>
            <person name="Willis J."/>
            <person name="Dawson D."/>
            <person name="Willson J.K.V."/>
            <person name="Gazdar A.F."/>
            <person name="Hartigan J."/>
            <person name="Wu L."/>
            <person name="Liu C."/>
            <person name="Parmigiani G."/>
            <person name="Park B.H."/>
            <person name="Bachman K.E."/>
            <person name="Papadopoulos N."/>
            <person name="Vogelstein B."/>
            <person name="Kinzler K.W."/>
            <person name="Velculescu V.E."/>
        </authorList>
    </citation>
    <scope>VARIANTS [LARGE SCALE ANALYSIS] GLY-322; HIS-3079 AND GLN-3359</scope>
</reference>
<reference key="6">
    <citation type="journal article" date="2011" name="Nature">
        <title>Exome sequencing identifies frequent mutation of the SWI/SNF complex gene PBRM1 in renal carcinoma.</title>
        <authorList>
            <person name="Varela I."/>
            <person name="Tarpey P."/>
            <person name="Raine K."/>
            <person name="Huang D."/>
            <person name="Ong C.K."/>
            <person name="Stephens P."/>
            <person name="Davies H."/>
            <person name="Jones D."/>
            <person name="Lin M.L."/>
            <person name="Teague J."/>
            <person name="Bignell G."/>
            <person name="Butler A."/>
            <person name="Cho J."/>
            <person name="Dalgliesh G.L."/>
            <person name="Galappaththige D."/>
            <person name="Greenman C."/>
            <person name="Hardy C."/>
            <person name="Jia M."/>
            <person name="Latimer C."/>
            <person name="Lau K.W."/>
            <person name="Marshall J."/>
            <person name="McLaren S."/>
            <person name="Menzies A."/>
            <person name="Mudie L."/>
            <person name="Stebbings L."/>
            <person name="Largaespada D.A."/>
            <person name="Wessels L.F.A."/>
            <person name="Richard S."/>
            <person name="Kahnoski R.J."/>
            <person name="Anema J."/>
            <person name="Tuveson D.A."/>
            <person name="Perez-Mancera P.A."/>
            <person name="Mustonen V."/>
            <person name="Fischer A."/>
            <person name="Adams D.J."/>
            <person name="Rust A."/>
            <person name="Chan-On W."/>
            <person name="Subimerb C."/>
            <person name="Dykema K."/>
            <person name="Furge K."/>
            <person name="Campbell P.J."/>
            <person name="Teh B.T."/>
            <person name="Stratton M.R."/>
            <person name="Futreal P.A."/>
        </authorList>
    </citation>
    <scope>VARIANT CYS-2020</scope>
</reference>
<organism>
    <name type="scientific">Homo sapiens</name>
    <name type="common">Human</name>
    <dbReference type="NCBI Taxonomy" id="9606"/>
    <lineage>
        <taxon>Eukaryota</taxon>
        <taxon>Metazoa</taxon>
        <taxon>Chordata</taxon>
        <taxon>Craniata</taxon>
        <taxon>Vertebrata</taxon>
        <taxon>Euteleostomi</taxon>
        <taxon>Mammalia</taxon>
        <taxon>Eutheria</taxon>
        <taxon>Euarchontoglires</taxon>
        <taxon>Primates</taxon>
        <taxon>Haplorrhini</taxon>
        <taxon>Catarrhini</taxon>
        <taxon>Hominidae</taxon>
        <taxon>Homo</taxon>
    </lineage>
</organism>
<comment type="function">
    <text evidence="2">Involved in dendrite development.</text>
</comment>
<comment type="subcellular location">
    <subcellularLocation>
        <location evidence="2">Cell membrane</location>
        <topology evidence="2">Multi-pass membrane protein</topology>
    </subcellularLocation>
</comment>
<comment type="alternative products">
    <event type="alternative splicing"/>
    <isoform>
        <id>Q7Z407-1</id>
        <name>1</name>
        <sequence type="displayed"/>
    </isoform>
    <isoform>
        <id>Q7Z407-2</id>
        <name>2</name>
        <sequence type="described" ref="VSP_009047"/>
    </isoform>
    <isoform>
        <id>Q7Z407-3</id>
        <name>3</name>
        <sequence type="described" ref="VSP_009048 VSP_009049"/>
    </isoform>
    <isoform>
        <id>Q7Z407-4</id>
        <name>4</name>
        <sequence type="described" ref="VSP_009050"/>
    </isoform>
    <isoform>
        <id>Q7Z407-5</id>
        <name>5</name>
        <sequence type="described" ref="VSP_009051 VSP_009052"/>
    </isoform>
</comment>
<comment type="tissue specificity">
    <text evidence="7 8">Weakly expressed in most tissues, except in brain. Expressed at intermediate level in brain, including cerebellum, substantia nigra, thalamus, spinal cord, hippocampus and fetal brain. Also expressed in testis.</text>
</comment>
<comment type="domain">
    <text evidence="2">The intracellular region is dispensable for its function.</text>
</comment>
<comment type="similarity">
    <text evidence="15">Belongs to the CSMD family.</text>
</comment>
<comment type="sequence caution" evidence="15">
    <conflict type="erroneous initiation">
        <sequence resource="EMBL-CDS" id="AAO34702"/>
    </conflict>
</comment>
<evidence type="ECO:0000250" key="1"/>
<evidence type="ECO:0000250" key="2">
    <source>
        <dbReference type="UniProtKB" id="Q80T79"/>
    </source>
</evidence>
<evidence type="ECO:0000255" key="3"/>
<evidence type="ECO:0000255" key="4">
    <source>
        <dbReference type="PROSITE-ProRule" id="PRU00059"/>
    </source>
</evidence>
<evidence type="ECO:0000255" key="5">
    <source>
        <dbReference type="PROSITE-ProRule" id="PRU00302"/>
    </source>
</evidence>
<evidence type="ECO:0000256" key="6">
    <source>
        <dbReference type="SAM" id="MobiDB-lite"/>
    </source>
</evidence>
<evidence type="ECO:0000269" key="7">
    <source>
    </source>
</evidence>
<evidence type="ECO:0000269" key="8">
    <source>
    </source>
</evidence>
<evidence type="ECO:0000269" key="9">
    <source>
    </source>
</evidence>
<evidence type="ECO:0000269" key="10">
    <source>
    </source>
</evidence>
<evidence type="ECO:0000303" key="11">
    <source>
    </source>
</evidence>
<evidence type="ECO:0000303" key="12">
    <source>
    </source>
</evidence>
<evidence type="ECO:0000303" key="13">
    <source>
    </source>
</evidence>
<evidence type="ECO:0000303" key="14">
    <source>
    </source>
</evidence>
<evidence type="ECO:0000305" key="15"/>
<proteinExistence type="evidence at protein level"/>
<gene>
    <name type="primary">CSMD3</name>
    <name type="synonym">KIAA1894</name>
</gene>
<keyword id="KW-0025">Alternative splicing</keyword>
<keyword id="KW-1003">Cell membrane</keyword>
<keyword id="KW-1015">Disulfide bond</keyword>
<keyword id="KW-0325">Glycoprotein</keyword>
<keyword id="KW-0472">Membrane</keyword>
<keyword id="KW-1267">Proteomics identification</keyword>
<keyword id="KW-1185">Reference proteome</keyword>
<keyword id="KW-0677">Repeat</keyword>
<keyword id="KW-0768">Sushi</keyword>
<keyword id="KW-0812">Transmembrane</keyword>
<keyword id="KW-1133">Transmembrane helix</keyword>
<accession>Q7Z407</accession>
<accession>Q96PZ3</accession>
<name>CSMD3_HUMAN</name>